<organism>
    <name type="scientific">Geobacillus sp. (strain WCH70)</name>
    <dbReference type="NCBI Taxonomy" id="471223"/>
    <lineage>
        <taxon>Bacteria</taxon>
        <taxon>Bacillati</taxon>
        <taxon>Bacillota</taxon>
        <taxon>Bacilli</taxon>
        <taxon>Bacillales</taxon>
        <taxon>Anoxybacillaceae</taxon>
        <taxon>Geobacillus</taxon>
    </lineage>
</organism>
<reference key="1">
    <citation type="submission" date="2009-06" db="EMBL/GenBank/DDBJ databases">
        <title>Complete sequence of chromosome of Geopacillus sp. WCH70.</title>
        <authorList>
            <consortium name="US DOE Joint Genome Institute"/>
            <person name="Lucas S."/>
            <person name="Copeland A."/>
            <person name="Lapidus A."/>
            <person name="Glavina del Rio T."/>
            <person name="Dalin E."/>
            <person name="Tice H."/>
            <person name="Bruce D."/>
            <person name="Goodwin L."/>
            <person name="Pitluck S."/>
            <person name="Chertkov O."/>
            <person name="Brettin T."/>
            <person name="Detter J.C."/>
            <person name="Han C."/>
            <person name="Larimer F."/>
            <person name="Land M."/>
            <person name="Hauser L."/>
            <person name="Kyrpides N."/>
            <person name="Mikhailova N."/>
            <person name="Brumm P."/>
            <person name="Mead D.A."/>
            <person name="Richardson P."/>
        </authorList>
    </citation>
    <scope>NUCLEOTIDE SEQUENCE [LARGE SCALE GENOMIC DNA]</scope>
    <source>
        <strain>WCH70</strain>
    </source>
</reference>
<comment type="catalytic activity">
    <reaction evidence="1">
        <text>CMP + ATP = CDP + ADP</text>
        <dbReference type="Rhea" id="RHEA:11600"/>
        <dbReference type="ChEBI" id="CHEBI:30616"/>
        <dbReference type="ChEBI" id="CHEBI:58069"/>
        <dbReference type="ChEBI" id="CHEBI:60377"/>
        <dbReference type="ChEBI" id="CHEBI:456216"/>
        <dbReference type="EC" id="2.7.4.25"/>
    </reaction>
</comment>
<comment type="catalytic activity">
    <reaction evidence="1">
        <text>dCMP + ATP = dCDP + ADP</text>
        <dbReference type="Rhea" id="RHEA:25094"/>
        <dbReference type="ChEBI" id="CHEBI:30616"/>
        <dbReference type="ChEBI" id="CHEBI:57566"/>
        <dbReference type="ChEBI" id="CHEBI:58593"/>
        <dbReference type="ChEBI" id="CHEBI:456216"/>
        <dbReference type="EC" id="2.7.4.25"/>
    </reaction>
</comment>
<comment type="subcellular location">
    <subcellularLocation>
        <location evidence="1">Cytoplasm</location>
    </subcellularLocation>
</comment>
<comment type="similarity">
    <text evidence="1">Belongs to the cytidylate kinase family. Type 1 subfamily.</text>
</comment>
<keyword id="KW-0067">ATP-binding</keyword>
<keyword id="KW-0963">Cytoplasm</keyword>
<keyword id="KW-0418">Kinase</keyword>
<keyword id="KW-0547">Nucleotide-binding</keyword>
<keyword id="KW-0808">Transferase</keyword>
<dbReference type="EC" id="2.7.4.25" evidence="1"/>
<dbReference type="EMBL" id="CP001638">
    <property type="protein sequence ID" value="ACS24881.1"/>
    <property type="molecule type" value="Genomic_DNA"/>
</dbReference>
<dbReference type="SMR" id="C5D3G6"/>
<dbReference type="STRING" id="471223.GWCH70_2171"/>
<dbReference type="KEGG" id="gwc:GWCH70_2171"/>
<dbReference type="eggNOG" id="COG0283">
    <property type="taxonomic scope" value="Bacteria"/>
</dbReference>
<dbReference type="HOGENOM" id="CLU_079959_0_2_9"/>
<dbReference type="OrthoDB" id="9807434at2"/>
<dbReference type="GO" id="GO:0005829">
    <property type="term" value="C:cytosol"/>
    <property type="evidence" value="ECO:0007669"/>
    <property type="project" value="TreeGrafter"/>
</dbReference>
<dbReference type="GO" id="GO:0005524">
    <property type="term" value="F:ATP binding"/>
    <property type="evidence" value="ECO:0007669"/>
    <property type="project" value="UniProtKB-UniRule"/>
</dbReference>
<dbReference type="GO" id="GO:0036430">
    <property type="term" value="F:CMP kinase activity"/>
    <property type="evidence" value="ECO:0007669"/>
    <property type="project" value="RHEA"/>
</dbReference>
<dbReference type="GO" id="GO:0036431">
    <property type="term" value="F:dCMP kinase activity"/>
    <property type="evidence" value="ECO:0007669"/>
    <property type="project" value="RHEA"/>
</dbReference>
<dbReference type="GO" id="GO:0015949">
    <property type="term" value="P:nucleobase-containing small molecule interconversion"/>
    <property type="evidence" value="ECO:0007669"/>
    <property type="project" value="TreeGrafter"/>
</dbReference>
<dbReference type="GO" id="GO:0006220">
    <property type="term" value="P:pyrimidine nucleotide metabolic process"/>
    <property type="evidence" value="ECO:0007669"/>
    <property type="project" value="UniProtKB-UniRule"/>
</dbReference>
<dbReference type="CDD" id="cd02020">
    <property type="entry name" value="CMPK"/>
    <property type="match status" value="1"/>
</dbReference>
<dbReference type="FunFam" id="3.40.50.300:FF:000484">
    <property type="entry name" value="Cytidylate kinase"/>
    <property type="match status" value="1"/>
</dbReference>
<dbReference type="Gene3D" id="3.40.50.300">
    <property type="entry name" value="P-loop containing nucleotide triphosphate hydrolases"/>
    <property type="match status" value="1"/>
</dbReference>
<dbReference type="HAMAP" id="MF_00238">
    <property type="entry name" value="Cytidyl_kinase_type1"/>
    <property type="match status" value="1"/>
</dbReference>
<dbReference type="InterPro" id="IPR003136">
    <property type="entry name" value="Cytidylate_kin"/>
</dbReference>
<dbReference type="InterPro" id="IPR011994">
    <property type="entry name" value="Cytidylate_kinase_dom"/>
</dbReference>
<dbReference type="InterPro" id="IPR027417">
    <property type="entry name" value="P-loop_NTPase"/>
</dbReference>
<dbReference type="NCBIfam" id="TIGR00017">
    <property type="entry name" value="cmk"/>
    <property type="match status" value="1"/>
</dbReference>
<dbReference type="PANTHER" id="PTHR21299:SF2">
    <property type="entry name" value="CYTIDYLATE KINASE"/>
    <property type="match status" value="1"/>
</dbReference>
<dbReference type="PANTHER" id="PTHR21299">
    <property type="entry name" value="CYTIDYLATE KINASE/PANTOATE-BETA-ALANINE LIGASE"/>
    <property type="match status" value="1"/>
</dbReference>
<dbReference type="Pfam" id="PF02224">
    <property type="entry name" value="Cytidylate_kin"/>
    <property type="match status" value="1"/>
</dbReference>
<dbReference type="SUPFAM" id="SSF52540">
    <property type="entry name" value="P-loop containing nucleoside triphosphate hydrolases"/>
    <property type="match status" value="1"/>
</dbReference>
<gene>
    <name evidence="1" type="primary">cmk</name>
    <name type="ordered locus">GWCH70_2171</name>
</gene>
<proteinExistence type="inferred from homology"/>
<protein>
    <recommendedName>
        <fullName evidence="1">Cytidylate kinase</fullName>
        <shortName evidence="1">CK</shortName>
        <ecNumber evidence="1">2.7.4.25</ecNumber>
    </recommendedName>
    <alternativeName>
        <fullName evidence="1">Cytidine monophosphate kinase</fullName>
        <shortName evidence="1">CMP kinase</shortName>
    </alternativeName>
</protein>
<feature type="chain" id="PRO_1000204452" description="Cytidylate kinase">
    <location>
        <begin position="1"/>
        <end position="224"/>
    </location>
</feature>
<feature type="binding site" evidence="1">
    <location>
        <begin position="11"/>
        <end position="19"/>
    </location>
    <ligand>
        <name>ATP</name>
        <dbReference type="ChEBI" id="CHEBI:30616"/>
    </ligand>
</feature>
<name>KCY_GEOSW</name>
<accession>C5D3G6</accession>
<evidence type="ECO:0000255" key="1">
    <source>
        <dbReference type="HAMAP-Rule" id="MF_00238"/>
    </source>
</evidence>
<sequence>MRNNIRIAIDGPAAAGKSTVAKIIAKRLSYLYIDTGAMYRALTYVALQQKVALDDEQALISLLKNTYIELKSSEQGQLVFVNGEDVTNIIRSEEVTNAVSLVAKHPSVREEMVARQRALAKNGGVVMDGRDIGTYVLPNAEVKIFLKASVEERAKRRHAENIARGFPSDLETLKKEIARRDQIDSEREVAPLKKAEDAIEIDTTSLSIEEVVDRIMEIVNERIG</sequence>